<name>TAFA5_HUMAN</name>
<protein>
    <recommendedName>
        <fullName evidence="9">Chemokine-like protein TAFA-5</fullName>
    </recommendedName>
</protein>
<evidence type="ECO:0000250" key="1">
    <source>
        <dbReference type="UniProtKB" id="M0R7X9"/>
    </source>
</evidence>
<evidence type="ECO:0000250" key="2">
    <source>
        <dbReference type="UniProtKB" id="Q91WE9"/>
    </source>
</evidence>
<evidence type="ECO:0000255" key="3">
    <source>
        <dbReference type="PROSITE-ProRule" id="PRU00498"/>
    </source>
</evidence>
<evidence type="ECO:0000269" key="4">
    <source>
    </source>
</evidence>
<evidence type="ECO:0000269" key="5">
    <source>
    </source>
</evidence>
<evidence type="ECO:0000303" key="6">
    <source>
    </source>
</evidence>
<evidence type="ECO:0000303" key="7">
    <source>
    </source>
</evidence>
<evidence type="ECO:0000303" key="8">
    <source>
    </source>
</evidence>
<evidence type="ECO:0000305" key="9"/>
<evidence type="ECO:0000305" key="10">
    <source>
    </source>
</evidence>
<evidence type="ECO:0000312" key="11">
    <source>
        <dbReference type="HGNC" id="HGNC:21592"/>
    </source>
</evidence>
<feature type="signal peptide" evidence="5">
    <location>
        <begin position="1"/>
        <end position="43"/>
    </location>
</feature>
<feature type="chain" id="PRO_0000042732" description="Chemokine-like protein TAFA-5" evidence="10">
    <location>
        <begin position="44"/>
        <end position="132"/>
    </location>
</feature>
<feature type="glycosylation site" description="N-linked (GlcNAc...) asparagine" evidence="3">
    <location>
        <position position="113"/>
    </location>
</feature>
<feature type="splice variant" id="VSP_035191" description="In isoform 3." evidence="9">
    <original>MAPSPRTGSRQDATALPSMSSTFWAFMILASLLIAYCSQLAAGTCEIVTLDRDSSQPRRTIARQTARCACRKGQIAGTTRARPACVD</original>
    <variation>MYHHREWP</variation>
    <location>
        <begin position="1"/>
        <end position="87"/>
    </location>
</feature>
<feature type="splice variant" id="VSP_016068" description="In isoform 2." evidence="6 7 8">
    <original>MAPSPRTGSRQDATALPSMSSTFWAFMILASLLIAYCS</original>
    <variation>MQLLKALWALAGAALCCFLVLVIHAQFLKEG</variation>
    <location>
        <begin position="1"/>
        <end position="38"/>
    </location>
</feature>
<feature type="sequence conflict" description="In Ref. 3; AAQ89206." evidence="9" ref="3">
    <original>AGAALCCFLVLVI</original>
    <variation>V</variation>
    <location sequence="Q7Z5A7-2">
        <begin position="11"/>
        <end position="23"/>
    </location>
</feature>
<dbReference type="EMBL" id="AY325118">
    <property type="protein sequence ID" value="AAP92410.1"/>
    <property type="molecule type" value="mRNA"/>
</dbReference>
<dbReference type="EMBL" id="AF131851">
    <property type="protein sequence ID" value="AAD20061.1"/>
    <property type="status" value="ALT_INIT"/>
    <property type="molecule type" value="mRNA"/>
</dbReference>
<dbReference type="EMBL" id="AY358847">
    <property type="protein sequence ID" value="AAQ89206.1"/>
    <property type="molecule type" value="mRNA"/>
</dbReference>
<dbReference type="EMBL" id="AK123443">
    <property type="protein sequence ID" value="BAG53905.1"/>
    <property type="molecule type" value="mRNA"/>
</dbReference>
<dbReference type="EMBL" id="AK125256">
    <property type="protein sequence ID" value="BAG54175.1"/>
    <property type="molecule type" value="mRNA"/>
</dbReference>
<dbReference type="EMBL" id="AL096843">
    <property type="status" value="NOT_ANNOTATED_CDS"/>
    <property type="molecule type" value="Genomic_DNA"/>
</dbReference>
<dbReference type="EMBL" id="AL096853">
    <property type="status" value="NOT_ANNOTATED_CDS"/>
    <property type="molecule type" value="Genomic_DNA"/>
</dbReference>
<dbReference type="EMBL" id="Z83837">
    <property type="status" value="NOT_ANNOTATED_CDS"/>
    <property type="molecule type" value="Genomic_DNA"/>
</dbReference>
<dbReference type="EMBL" id="Z84468">
    <property type="status" value="NOT_ANNOTATED_CDS"/>
    <property type="molecule type" value="Genomic_DNA"/>
</dbReference>
<dbReference type="EMBL" id="BC039396">
    <property type="protein sequence ID" value="AAH39396.2"/>
    <property type="status" value="ALT_INIT"/>
    <property type="molecule type" value="mRNA"/>
</dbReference>
<dbReference type="CCDS" id="CCDS46728.1">
    <molecule id="Q7Z5A7-1"/>
</dbReference>
<dbReference type="CCDS" id="CCDS46729.1">
    <molecule id="Q7Z5A7-2"/>
</dbReference>
<dbReference type="RefSeq" id="NP_001076436.1">
    <molecule id="Q7Z5A7-1"/>
    <property type="nucleotide sequence ID" value="NM_001082967.3"/>
</dbReference>
<dbReference type="RefSeq" id="NP_056196.2">
    <molecule id="Q7Z5A7-2"/>
    <property type="nucleotide sequence ID" value="NM_015381.7"/>
</dbReference>
<dbReference type="BioGRID" id="117345">
    <property type="interactions" value="24"/>
</dbReference>
<dbReference type="FunCoup" id="Q7Z5A7">
    <property type="interactions" value="219"/>
</dbReference>
<dbReference type="IntAct" id="Q7Z5A7">
    <property type="interactions" value="14"/>
</dbReference>
<dbReference type="MINT" id="Q7Z5A7"/>
<dbReference type="STRING" id="9606.ENSP00000383933"/>
<dbReference type="GlyCosmos" id="Q7Z5A7">
    <property type="glycosylation" value="1 site, No reported glycans"/>
</dbReference>
<dbReference type="GlyGen" id="Q7Z5A7">
    <property type="glycosylation" value="1 site"/>
</dbReference>
<dbReference type="iPTMnet" id="Q7Z5A7"/>
<dbReference type="PhosphoSitePlus" id="Q7Z5A7"/>
<dbReference type="BioMuta" id="FAM19A5"/>
<dbReference type="DMDM" id="205371754"/>
<dbReference type="MassIVE" id="Q7Z5A7"/>
<dbReference type="PaxDb" id="9606-ENSP00000383933"/>
<dbReference type="PeptideAtlas" id="Q7Z5A7"/>
<dbReference type="ProteomicsDB" id="69275">
    <molecule id="Q7Z5A7-1"/>
</dbReference>
<dbReference type="ProteomicsDB" id="69276">
    <molecule id="Q7Z5A7-2"/>
</dbReference>
<dbReference type="ProteomicsDB" id="69277">
    <molecule id="Q7Z5A7-3"/>
</dbReference>
<dbReference type="Antibodypedia" id="67212">
    <property type="antibodies" value="21 antibodies from 12 providers"/>
</dbReference>
<dbReference type="DNASU" id="25817"/>
<dbReference type="Ensembl" id="ENST00000358295.9">
    <molecule id="Q7Z5A7-2"/>
    <property type="protein sequence ID" value="ENSP00000351043.5"/>
    <property type="gene ID" value="ENSG00000219438.9"/>
</dbReference>
<dbReference type="Ensembl" id="ENST00000402357.6">
    <molecule id="Q7Z5A7-1"/>
    <property type="protein sequence ID" value="ENSP00000383933.2"/>
    <property type="gene ID" value="ENSG00000219438.9"/>
</dbReference>
<dbReference type="Ensembl" id="ENST00000406880.1">
    <molecule id="Q7Z5A7-3"/>
    <property type="protein sequence ID" value="ENSP00000385603.1"/>
    <property type="gene ID" value="ENSG00000219438.9"/>
</dbReference>
<dbReference type="GeneID" id="25817"/>
<dbReference type="KEGG" id="hsa:25817"/>
<dbReference type="MANE-Select" id="ENST00000402357.6">
    <property type="protein sequence ID" value="ENSP00000383933.2"/>
    <property type="RefSeq nucleotide sequence ID" value="NM_001082967.3"/>
    <property type="RefSeq protein sequence ID" value="NP_001076436.1"/>
</dbReference>
<dbReference type="UCSC" id="uc003bim.6">
    <molecule id="Q7Z5A7-1"/>
    <property type="organism name" value="human"/>
</dbReference>
<dbReference type="AGR" id="HGNC:21592"/>
<dbReference type="CTD" id="25817"/>
<dbReference type="DisGeNET" id="25817"/>
<dbReference type="GeneCards" id="TAFA5"/>
<dbReference type="HGNC" id="HGNC:21592">
    <property type="gene designation" value="TAFA5"/>
</dbReference>
<dbReference type="HPA" id="ENSG00000219438">
    <property type="expression patterns" value="Tissue enriched (brain)"/>
</dbReference>
<dbReference type="MIM" id="617499">
    <property type="type" value="gene"/>
</dbReference>
<dbReference type="neXtProt" id="NX_Q7Z5A7"/>
<dbReference type="OpenTargets" id="ENSG00000219438"/>
<dbReference type="PharmGKB" id="PA134887312"/>
<dbReference type="VEuPathDB" id="HostDB:ENSG00000219438"/>
<dbReference type="eggNOG" id="ENOG502RZT2">
    <property type="taxonomic scope" value="Eukaryota"/>
</dbReference>
<dbReference type="GeneTree" id="ENSGT00940000160682"/>
<dbReference type="HOGENOM" id="CLU_126078_5_0_1"/>
<dbReference type="InParanoid" id="Q7Z5A7"/>
<dbReference type="OMA" id="ARCACHK"/>
<dbReference type="OrthoDB" id="8957936at2759"/>
<dbReference type="PAN-GO" id="Q7Z5A7">
    <property type="GO annotations" value="4 GO annotations based on evolutionary models"/>
</dbReference>
<dbReference type="PhylomeDB" id="Q7Z5A7"/>
<dbReference type="TreeFam" id="TF331749"/>
<dbReference type="PathwayCommons" id="Q7Z5A7"/>
<dbReference type="SignaLink" id="Q7Z5A7"/>
<dbReference type="BioGRID-ORCS" id="25817">
    <property type="hits" value="13 hits in 1144 CRISPR screens"/>
</dbReference>
<dbReference type="ChiTaRS" id="FAM19A5">
    <property type="organism name" value="human"/>
</dbReference>
<dbReference type="GeneWiki" id="FAM19A5"/>
<dbReference type="GenomeRNAi" id="25817"/>
<dbReference type="Pharos" id="Q7Z5A7">
    <property type="development level" value="Tdark"/>
</dbReference>
<dbReference type="PRO" id="PR:Q7Z5A7"/>
<dbReference type="Proteomes" id="UP000005640">
    <property type="component" value="Chromosome 22"/>
</dbReference>
<dbReference type="RNAct" id="Q7Z5A7">
    <property type="molecule type" value="protein"/>
</dbReference>
<dbReference type="Bgee" id="ENSG00000219438">
    <property type="expression patterns" value="Expressed in cerebellar vermis and 153 other cell types or tissues"/>
</dbReference>
<dbReference type="ExpressionAtlas" id="Q7Z5A7">
    <property type="expression patterns" value="baseline and differential"/>
</dbReference>
<dbReference type="GO" id="GO:0005737">
    <property type="term" value="C:cytoplasm"/>
    <property type="evidence" value="ECO:0007669"/>
    <property type="project" value="Ensembl"/>
</dbReference>
<dbReference type="GO" id="GO:0005615">
    <property type="term" value="C:extracellular space"/>
    <property type="evidence" value="ECO:0000314"/>
    <property type="project" value="MGI"/>
</dbReference>
<dbReference type="GO" id="GO:0005125">
    <property type="term" value="F:cytokine activity"/>
    <property type="evidence" value="ECO:0007669"/>
    <property type="project" value="UniProtKB-KW"/>
</dbReference>
<dbReference type="GO" id="GO:0001664">
    <property type="term" value="F:G protein-coupled receptor binding"/>
    <property type="evidence" value="ECO:0000353"/>
    <property type="project" value="MGI"/>
</dbReference>
<dbReference type="GO" id="GO:0048018">
    <property type="term" value="F:receptor ligand activity"/>
    <property type="evidence" value="ECO:0000353"/>
    <property type="project" value="MGI"/>
</dbReference>
<dbReference type="GO" id="GO:0007186">
    <property type="term" value="P:G protein-coupled receptor signaling pathway"/>
    <property type="evidence" value="ECO:0000314"/>
    <property type="project" value="MGI"/>
</dbReference>
<dbReference type="GO" id="GO:1904706">
    <property type="term" value="P:negative regulation of vascular associated smooth muscle cell proliferation"/>
    <property type="evidence" value="ECO:0000314"/>
    <property type="project" value="MGI"/>
</dbReference>
<dbReference type="GO" id="GO:0061044">
    <property type="term" value="P:negative regulation of vascular wound healing"/>
    <property type="evidence" value="ECO:0007669"/>
    <property type="project" value="Ensembl"/>
</dbReference>
<dbReference type="InterPro" id="IPR020350">
    <property type="entry name" value="Chemokine-like_TAFA"/>
</dbReference>
<dbReference type="InterPro" id="IPR040329">
    <property type="entry name" value="TAFA-5"/>
</dbReference>
<dbReference type="PANTHER" id="PTHR31878:SF0">
    <property type="entry name" value="CHEMOKINE-LIKE PROTEIN TAFA-5"/>
    <property type="match status" value="1"/>
</dbReference>
<dbReference type="PANTHER" id="PTHR31878">
    <property type="entry name" value="CHEMOKINE-LIKE PROTEIN TAFA-5-RELATED"/>
    <property type="match status" value="1"/>
</dbReference>
<dbReference type="Pfam" id="PF12020">
    <property type="entry name" value="TAFA"/>
    <property type="match status" value="1"/>
</dbReference>
<accession>Q7Z5A7</accession>
<accession>A6NII9</accession>
<accession>B0QZ13</accession>
<accession>B0QZ14</accession>
<accession>B0QZ15</accession>
<accession>O95902</accession>
<accession>Q5H9C4</accession>
<accession>Q6UWC9</accession>
<accession>Q8IXR8</accession>
<keyword id="KW-0025">Alternative splicing</keyword>
<keyword id="KW-0202">Cytokine</keyword>
<keyword id="KW-0903">Direct protein sequencing</keyword>
<keyword id="KW-0325">Glycoprotein</keyword>
<keyword id="KW-1267">Proteomics identification</keyword>
<keyword id="KW-1185">Reference proteome</keyword>
<keyword id="KW-0964">Secreted</keyword>
<keyword id="KW-0732">Signal</keyword>
<reference key="1">
    <citation type="journal article" date="2004" name="Genomics">
        <title>TAFA: a novel secreted family with conserved cysteine residues and restricted expression in the brain.</title>
        <authorList>
            <person name="Tom Tang Y."/>
            <person name="Emtage P."/>
            <person name="Funk W.D."/>
            <person name="Hu T."/>
            <person name="Arterburn M."/>
            <person name="Park E.E."/>
            <person name="Rupp F."/>
        </authorList>
    </citation>
    <scope>NUCLEOTIDE SEQUENCE [MRNA] (ISOFORM 2)</scope>
    <scope>TISSUE SPECIFICITY</scope>
    <scope>SUBCELLULAR LOCATION</scope>
</reference>
<reference key="2">
    <citation type="submission" date="1999-02" db="EMBL/GenBank/DDBJ databases">
        <authorList>
            <person name="Mei G."/>
            <person name="Yu W."/>
            <person name="Gibbs R.A."/>
        </authorList>
    </citation>
    <scope>NUCLEOTIDE SEQUENCE [LARGE SCALE MRNA] (ISOFORM 1)</scope>
    <source>
        <tissue>Brain</tissue>
    </source>
</reference>
<reference key="3">
    <citation type="journal article" date="2003" name="Genome Res.">
        <title>The secreted protein discovery initiative (SPDI), a large-scale effort to identify novel human secreted and transmembrane proteins: a bioinformatics assessment.</title>
        <authorList>
            <person name="Clark H.F."/>
            <person name="Gurney A.L."/>
            <person name="Abaya E."/>
            <person name="Baker K."/>
            <person name="Baldwin D.T."/>
            <person name="Brush J."/>
            <person name="Chen J."/>
            <person name="Chow B."/>
            <person name="Chui C."/>
            <person name="Crowley C."/>
            <person name="Currell B."/>
            <person name="Deuel B."/>
            <person name="Dowd P."/>
            <person name="Eaton D."/>
            <person name="Foster J.S."/>
            <person name="Grimaldi C."/>
            <person name="Gu Q."/>
            <person name="Hass P.E."/>
            <person name="Heldens S."/>
            <person name="Huang A."/>
            <person name="Kim H.S."/>
            <person name="Klimowski L."/>
            <person name="Jin Y."/>
            <person name="Johnson S."/>
            <person name="Lee J."/>
            <person name="Lewis L."/>
            <person name="Liao D."/>
            <person name="Mark M.R."/>
            <person name="Robbie E."/>
            <person name="Sanchez C."/>
            <person name="Schoenfeld J."/>
            <person name="Seshagiri S."/>
            <person name="Simmons L."/>
            <person name="Singh J."/>
            <person name="Smith V."/>
            <person name="Stinson J."/>
            <person name="Vagts A."/>
            <person name="Vandlen R.L."/>
            <person name="Watanabe C."/>
            <person name="Wieand D."/>
            <person name="Woods K."/>
            <person name="Xie M.-H."/>
            <person name="Yansura D.G."/>
            <person name="Yi S."/>
            <person name="Yu G."/>
            <person name="Yuan J."/>
            <person name="Zhang M."/>
            <person name="Zhang Z."/>
            <person name="Goddard A.D."/>
            <person name="Wood W.I."/>
            <person name="Godowski P.J."/>
            <person name="Gray A.M."/>
        </authorList>
    </citation>
    <scope>NUCLEOTIDE SEQUENCE [LARGE SCALE MRNA] (ISOFORM 2)</scope>
</reference>
<reference key="4">
    <citation type="journal article" date="2004" name="Nat. Genet.">
        <title>Complete sequencing and characterization of 21,243 full-length human cDNAs.</title>
        <authorList>
            <person name="Ota T."/>
            <person name="Suzuki Y."/>
            <person name="Nishikawa T."/>
            <person name="Otsuki T."/>
            <person name="Sugiyama T."/>
            <person name="Irie R."/>
            <person name="Wakamatsu A."/>
            <person name="Hayashi K."/>
            <person name="Sato H."/>
            <person name="Nagai K."/>
            <person name="Kimura K."/>
            <person name="Makita H."/>
            <person name="Sekine M."/>
            <person name="Obayashi M."/>
            <person name="Nishi T."/>
            <person name="Shibahara T."/>
            <person name="Tanaka T."/>
            <person name="Ishii S."/>
            <person name="Yamamoto J."/>
            <person name="Saito K."/>
            <person name="Kawai Y."/>
            <person name="Isono Y."/>
            <person name="Nakamura Y."/>
            <person name="Nagahari K."/>
            <person name="Murakami K."/>
            <person name="Yasuda T."/>
            <person name="Iwayanagi T."/>
            <person name="Wagatsuma M."/>
            <person name="Shiratori A."/>
            <person name="Sudo H."/>
            <person name="Hosoiri T."/>
            <person name="Kaku Y."/>
            <person name="Kodaira H."/>
            <person name="Kondo H."/>
            <person name="Sugawara M."/>
            <person name="Takahashi M."/>
            <person name="Kanda K."/>
            <person name="Yokoi T."/>
            <person name="Furuya T."/>
            <person name="Kikkawa E."/>
            <person name="Omura Y."/>
            <person name="Abe K."/>
            <person name="Kamihara K."/>
            <person name="Katsuta N."/>
            <person name="Sato K."/>
            <person name="Tanikawa M."/>
            <person name="Yamazaki M."/>
            <person name="Ninomiya K."/>
            <person name="Ishibashi T."/>
            <person name="Yamashita H."/>
            <person name="Murakawa K."/>
            <person name="Fujimori K."/>
            <person name="Tanai H."/>
            <person name="Kimata M."/>
            <person name="Watanabe M."/>
            <person name="Hiraoka S."/>
            <person name="Chiba Y."/>
            <person name="Ishida S."/>
            <person name="Ono Y."/>
            <person name="Takiguchi S."/>
            <person name="Watanabe S."/>
            <person name="Yosida M."/>
            <person name="Hotuta T."/>
            <person name="Kusano J."/>
            <person name="Kanehori K."/>
            <person name="Takahashi-Fujii A."/>
            <person name="Hara H."/>
            <person name="Tanase T.-O."/>
            <person name="Nomura Y."/>
            <person name="Togiya S."/>
            <person name="Komai F."/>
            <person name="Hara R."/>
            <person name="Takeuchi K."/>
            <person name="Arita M."/>
            <person name="Imose N."/>
            <person name="Musashino K."/>
            <person name="Yuuki H."/>
            <person name="Oshima A."/>
            <person name="Sasaki N."/>
            <person name="Aotsuka S."/>
            <person name="Yoshikawa Y."/>
            <person name="Matsunawa H."/>
            <person name="Ichihara T."/>
            <person name="Shiohata N."/>
            <person name="Sano S."/>
            <person name="Moriya S."/>
            <person name="Momiyama H."/>
            <person name="Satoh N."/>
            <person name="Takami S."/>
            <person name="Terashima Y."/>
            <person name="Suzuki O."/>
            <person name="Nakagawa S."/>
            <person name="Senoh A."/>
            <person name="Mizoguchi H."/>
            <person name="Goto Y."/>
            <person name="Shimizu F."/>
            <person name="Wakebe H."/>
            <person name="Hishigaki H."/>
            <person name="Watanabe T."/>
            <person name="Sugiyama A."/>
            <person name="Takemoto M."/>
            <person name="Kawakami B."/>
            <person name="Yamazaki M."/>
            <person name="Watanabe K."/>
            <person name="Kumagai A."/>
            <person name="Itakura S."/>
            <person name="Fukuzumi Y."/>
            <person name="Fujimori Y."/>
            <person name="Komiyama M."/>
            <person name="Tashiro H."/>
            <person name="Tanigami A."/>
            <person name="Fujiwara T."/>
            <person name="Ono T."/>
            <person name="Yamada K."/>
            <person name="Fujii Y."/>
            <person name="Ozaki K."/>
            <person name="Hirao M."/>
            <person name="Ohmori Y."/>
            <person name="Kawabata A."/>
            <person name="Hikiji T."/>
            <person name="Kobatake N."/>
            <person name="Inagaki H."/>
            <person name="Ikema Y."/>
            <person name="Okamoto S."/>
            <person name="Okitani R."/>
            <person name="Kawakami T."/>
            <person name="Noguchi S."/>
            <person name="Itoh T."/>
            <person name="Shigeta K."/>
            <person name="Senba T."/>
            <person name="Matsumura K."/>
            <person name="Nakajima Y."/>
            <person name="Mizuno T."/>
            <person name="Morinaga M."/>
            <person name="Sasaki M."/>
            <person name="Togashi T."/>
            <person name="Oyama M."/>
            <person name="Hata H."/>
            <person name="Watanabe M."/>
            <person name="Komatsu T."/>
            <person name="Mizushima-Sugano J."/>
            <person name="Satoh T."/>
            <person name="Shirai Y."/>
            <person name="Takahashi Y."/>
            <person name="Nakagawa K."/>
            <person name="Okumura K."/>
            <person name="Nagase T."/>
            <person name="Nomura N."/>
            <person name="Kikuchi H."/>
            <person name="Masuho Y."/>
            <person name="Yamashita R."/>
            <person name="Nakai K."/>
            <person name="Yada T."/>
            <person name="Nakamura Y."/>
            <person name="Ohara O."/>
            <person name="Isogai T."/>
            <person name="Sugano S."/>
        </authorList>
    </citation>
    <scope>NUCLEOTIDE SEQUENCE [LARGE SCALE MRNA] (ISOFORM 2)</scope>
    <source>
        <tissue>Neuroblastoma</tissue>
        <tissue>Subthalamic nucleus</tissue>
    </source>
</reference>
<reference key="5">
    <citation type="journal article" date="1999" name="Nature">
        <title>The DNA sequence of human chromosome 22.</title>
        <authorList>
            <person name="Dunham I."/>
            <person name="Hunt A.R."/>
            <person name="Collins J.E."/>
            <person name="Bruskiewich R."/>
            <person name="Beare D.M."/>
            <person name="Clamp M."/>
            <person name="Smink L.J."/>
            <person name="Ainscough R."/>
            <person name="Almeida J.P."/>
            <person name="Babbage A.K."/>
            <person name="Bagguley C."/>
            <person name="Bailey J."/>
            <person name="Barlow K.F."/>
            <person name="Bates K.N."/>
            <person name="Beasley O.P."/>
            <person name="Bird C.P."/>
            <person name="Blakey S.E."/>
            <person name="Bridgeman A.M."/>
            <person name="Buck D."/>
            <person name="Burgess J."/>
            <person name="Burrill W.D."/>
            <person name="Burton J."/>
            <person name="Carder C."/>
            <person name="Carter N.P."/>
            <person name="Chen Y."/>
            <person name="Clark G."/>
            <person name="Clegg S.M."/>
            <person name="Cobley V.E."/>
            <person name="Cole C.G."/>
            <person name="Collier R.E."/>
            <person name="Connor R."/>
            <person name="Conroy D."/>
            <person name="Corby N.R."/>
            <person name="Coville G.J."/>
            <person name="Cox A.V."/>
            <person name="Davis J."/>
            <person name="Dawson E."/>
            <person name="Dhami P.D."/>
            <person name="Dockree C."/>
            <person name="Dodsworth S.J."/>
            <person name="Durbin R.M."/>
            <person name="Ellington A.G."/>
            <person name="Evans K.L."/>
            <person name="Fey J.M."/>
            <person name="Fleming K."/>
            <person name="French L."/>
            <person name="Garner A.A."/>
            <person name="Gilbert J.G.R."/>
            <person name="Goward M.E."/>
            <person name="Grafham D.V."/>
            <person name="Griffiths M.N.D."/>
            <person name="Hall C."/>
            <person name="Hall R.E."/>
            <person name="Hall-Tamlyn G."/>
            <person name="Heathcott R.W."/>
            <person name="Ho S."/>
            <person name="Holmes S."/>
            <person name="Hunt S.E."/>
            <person name="Jones M.C."/>
            <person name="Kershaw J."/>
            <person name="Kimberley A.M."/>
            <person name="King A."/>
            <person name="Laird G.K."/>
            <person name="Langford C.F."/>
            <person name="Leversha M.A."/>
            <person name="Lloyd C."/>
            <person name="Lloyd D.M."/>
            <person name="Martyn I.D."/>
            <person name="Mashreghi-Mohammadi M."/>
            <person name="Matthews L.H."/>
            <person name="Mccann O.T."/>
            <person name="Mcclay J."/>
            <person name="Mclaren S."/>
            <person name="McMurray A.A."/>
            <person name="Milne S.A."/>
            <person name="Mortimore B.J."/>
            <person name="Odell C.N."/>
            <person name="Pavitt R."/>
            <person name="Pearce A.V."/>
            <person name="Pearson D."/>
            <person name="Phillimore B.J.C.T."/>
            <person name="Phillips S.H."/>
            <person name="Plumb R.W."/>
            <person name="Ramsay H."/>
            <person name="Ramsey Y."/>
            <person name="Rogers L."/>
            <person name="Ross M.T."/>
            <person name="Scott C.E."/>
            <person name="Sehra H.K."/>
            <person name="Skuce C.D."/>
            <person name="Smalley S."/>
            <person name="Smith M.L."/>
            <person name="Soderlund C."/>
            <person name="Spragon L."/>
            <person name="Steward C.A."/>
            <person name="Sulston J.E."/>
            <person name="Swann R.M."/>
            <person name="Vaudin M."/>
            <person name="Wall M."/>
            <person name="Wallis J.M."/>
            <person name="Whiteley M.N."/>
            <person name="Willey D.L."/>
            <person name="Williams L."/>
            <person name="Williams S.A."/>
            <person name="Williamson H."/>
            <person name="Wilmer T.E."/>
            <person name="Wilming L."/>
            <person name="Wright C.L."/>
            <person name="Hubbard T."/>
            <person name="Bentley D.R."/>
            <person name="Beck S."/>
            <person name="Rogers J."/>
            <person name="Shimizu N."/>
            <person name="Minoshima S."/>
            <person name="Kawasaki K."/>
            <person name="Sasaki T."/>
            <person name="Asakawa S."/>
            <person name="Kudoh J."/>
            <person name="Shintani A."/>
            <person name="Shibuya K."/>
            <person name="Yoshizaki Y."/>
            <person name="Aoki N."/>
            <person name="Mitsuyama S."/>
            <person name="Roe B.A."/>
            <person name="Chen F."/>
            <person name="Chu L."/>
            <person name="Crabtree J."/>
            <person name="Deschamps S."/>
            <person name="Do A."/>
            <person name="Do T."/>
            <person name="Dorman A."/>
            <person name="Fang F."/>
            <person name="Fu Y."/>
            <person name="Hu P."/>
            <person name="Hua A."/>
            <person name="Kenton S."/>
            <person name="Lai H."/>
            <person name="Lao H.I."/>
            <person name="Lewis J."/>
            <person name="Lewis S."/>
            <person name="Lin S.-P."/>
            <person name="Loh P."/>
            <person name="Malaj E."/>
            <person name="Nguyen T."/>
            <person name="Pan H."/>
            <person name="Phan S."/>
            <person name="Qi S."/>
            <person name="Qian Y."/>
            <person name="Ray L."/>
            <person name="Ren Q."/>
            <person name="Shaull S."/>
            <person name="Sloan D."/>
            <person name="Song L."/>
            <person name="Wang Q."/>
            <person name="Wang Y."/>
            <person name="Wang Z."/>
            <person name="White J."/>
            <person name="Willingham D."/>
            <person name="Wu H."/>
            <person name="Yao Z."/>
            <person name="Zhan M."/>
            <person name="Zhang G."/>
            <person name="Chissoe S."/>
            <person name="Murray J."/>
            <person name="Miller N."/>
            <person name="Minx P."/>
            <person name="Fulton R."/>
            <person name="Johnson D."/>
            <person name="Bemis G."/>
            <person name="Bentley D."/>
            <person name="Bradshaw H."/>
            <person name="Bourne S."/>
            <person name="Cordes M."/>
            <person name="Du Z."/>
            <person name="Fulton L."/>
            <person name="Goela D."/>
            <person name="Graves T."/>
            <person name="Hawkins J."/>
            <person name="Hinds K."/>
            <person name="Kemp K."/>
            <person name="Latreille P."/>
            <person name="Layman D."/>
            <person name="Ozersky P."/>
            <person name="Rohlfing T."/>
            <person name="Scheet P."/>
            <person name="Walker C."/>
            <person name="Wamsley A."/>
            <person name="Wohldmann P."/>
            <person name="Pepin K."/>
            <person name="Nelson J."/>
            <person name="Korf I."/>
            <person name="Bedell J.A."/>
            <person name="Hillier L.W."/>
            <person name="Mardis E."/>
            <person name="Waterston R."/>
            <person name="Wilson R."/>
            <person name="Emanuel B.S."/>
            <person name="Shaikh T."/>
            <person name="Kurahashi H."/>
            <person name="Saitta S."/>
            <person name="Budarf M.L."/>
            <person name="McDermid H.E."/>
            <person name="Johnson A."/>
            <person name="Wong A.C.C."/>
            <person name="Morrow B.E."/>
            <person name="Edelmann L."/>
            <person name="Kim U.J."/>
            <person name="Shizuya H."/>
            <person name="Simon M.I."/>
            <person name="Dumanski J.P."/>
            <person name="Peyrard M."/>
            <person name="Kedra D."/>
            <person name="Seroussi E."/>
            <person name="Fransson I."/>
            <person name="Tapia I."/>
            <person name="Bruder C.E."/>
            <person name="O'Brien K.P."/>
            <person name="Wilkinson P."/>
            <person name="Bodenteich A."/>
            <person name="Hartman K."/>
            <person name="Hu X."/>
            <person name="Khan A.S."/>
            <person name="Lane L."/>
            <person name="Tilahun Y."/>
            <person name="Wright H."/>
        </authorList>
    </citation>
    <scope>NUCLEOTIDE SEQUENCE [LARGE SCALE GENOMIC DNA]</scope>
</reference>
<reference key="6">
    <citation type="journal article" date="2004" name="Genome Res.">
        <title>The status, quality, and expansion of the NIH full-length cDNA project: the Mammalian Gene Collection (MGC).</title>
        <authorList>
            <consortium name="The MGC Project Team"/>
        </authorList>
    </citation>
    <scope>NUCLEOTIDE SEQUENCE [LARGE SCALE MRNA] (ISOFORM 1)</scope>
    <source>
        <tissue>Hypothalamus</tissue>
    </source>
</reference>
<reference key="7">
    <citation type="journal article" date="2018" name="Circulation">
        <title>Novel Adipokine, FAM19A5, Inhibits Neointima Formation After Injury Through Sphingosine-1-Phosphate Receptor 2.</title>
        <authorList>
            <person name="Wang Y."/>
            <person name="Chen D."/>
            <person name="Zhang Y."/>
            <person name="Wang P."/>
            <person name="Zheng C."/>
            <person name="Zhang S."/>
            <person name="Yu B."/>
            <person name="Zhang L."/>
            <person name="Zhao G."/>
            <person name="Ma B."/>
            <person name="Cai Z."/>
            <person name="Xie N."/>
            <person name="Huang S."/>
            <person name="Liu Z."/>
            <person name="Mo X."/>
            <person name="Guan Y."/>
            <person name="Wang X."/>
            <person name="Fu Y."/>
            <person name="Ma D."/>
            <person name="Wang Y."/>
            <person name="Kong W."/>
        </authorList>
    </citation>
    <scope>PROTEIN SEQUENCE OF 44-53 (ISOFORMS 1 AND 2)</scope>
    <scope>SUBCELLULAR LOCATION</scope>
    <scope>TISSUE SPECIFICITY</scope>
</reference>
<gene>
    <name evidence="11" type="primary">TAFA5</name>
    <name evidence="11" type="synonym">FAM19A5</name>
    <name type="ORF">UNQ5208/PRO34524</name>
</gene>
<organism>
    <name type="scientific">Homo sapiens</name>
    <name type="common">Human</name>
    <dbReference type="NCBI Taxonomy" id="9606"/>
    <lineage>
        <taxon>Eukaryota</taxon>
        <taxon>Metazoa</taxon>
        <taxon>Chordata</taxon>
        <taxon>Craniata</taxon>
        <taxon>Vertebrata</taxon>
        <taxon>Euteleostomi</taxon>
        <taxon>Mammalia</taxon>
        <taxon>Eutheria</taxon>
        <taxon>Euarchontoglires</taxon>
        <taxon>Primates</taxon>
        <taxon>Haplorrhini</taxon>
        <taxon>Catarrhini</taxon>
        <taxon>Hominidae</taxon>
        <taxon>Homo</taxon>
    </lineage>
</organism>
<sequence length="132" mass="14301">MAPSPRTGSRQDATALPSMSSTFWAFMILASLLIAYCSQLAAGTCEIVTLDRDSSQPRRTIARQTARCACRKGQIAGTTRARPACVDARIIKTKQWCDMLPCLEGEGCDLLINRSGWTCTQPGGRIKTTTVS</sequence>
<comment type="function">
    <text evidence="1 2">Acts as a chemokine-like protein by regulating cell proliferation and migration through activation of G protein-coupled receptors (GPCRs), such as S1PR2 and FPR2 (By similarity). Stimulates chemotactic migration of macrophages mediated by the MAPK3/ERK1 and AKT1 pathway (By similarity). Blocks TNFSF11/RANKL-induced osteoclast formation from macrophages by inhibiting up-regulation of osteoclast fusogenic and differentiation genes (By similarity). Stimulation of macrophage migration and inhibition of osteoclast formation is mediated via GPCR FPR2 (By similarity). Acts as an adipokine by negatively regulating vascular smooth muscle cell (VSMC) proliferation and migration in response to platelet-derived growth factor stimulation via GPCR S1PR2 and G protein GNA12/GNA13-transmitted RHOA signaling (By similarity). Inhibits injury-induced cell proliferation and neointima formation in the femoral arteries (By similarity).</text>
</comment>
<comment type="subcellular location">
    <subcellularLocation>
        <location evidence="4 5">Secreted</location>
    </subcellularLocation>
</comment>
<comment type="alternative products">
    <event type="alternative splicing"/>
    <isoform>
        <id>Q7Z5A7-1</id>
        <name>1</name>
        <sequence type="displayed"/>
    </isoform>
    <isoform>
        <id>Q7Z5A7-2</id>
        <name>2</name>
        <sequence type="described" ref="VSP_016068"/>
    </isoform>
    <isoform>
        <id>Q7Z5A7-3</id>
        <name>3</name>
        <sequence type="described" ref="VSP_035191"/>
    </isoform>
</comment>
<comment type="tissue specificity">
    <text evidence="4 5">Expressed in the subcutaneous and perirenal adipose tissue (at protein level) (PubMed:29453251). Highly expressed in adipose tissue with moderate expression in the brain and ovary (PubMed:29453251). Isoform 2: Brain-specific (PubMed:15028294).</text>
</comment>
<comment type="miscellaneous">
    <molecule>Isoform 2</molecule>
    <text evidence="9">Contains a predicted signal peptide at positions 1-25.</text>
</comment>
<comment type="similarity">
    <text evidence="9">Belongs to the TAFA family.</text>
</comment>
<comment type="sequence caution" evidence="9">
    <conflict type="erroneous initiation">
        <sequence resource="EMBL-CDS" id="AAD20061"/>
    </conflict>
    <text>Extended N-terminus.</text>
</comment>
<comment type="sequence caution" evidence="9">
    <conflict type="erroneous initiation">
        <sequence resource="EMBL-CDS" id="AAH39396"/>
    </conflict>
    <text>Truncated N-terminus.</text>
</comment>
<proteinExistence type="evidence at protein level"/>